<gene>
    <name evidence="1" type="primary">hisA</name>
    <name type="ordered locus">Csac_2021</name>
</gene>
<proteinExistence type="inferred from homology"/>
<feature type="chain" id="PRO_1000063196" description="1-(5-phosphoribosyl)-5-[(5-phosphoribosylamino)methylideneamino] imidazole-4-carboxamide isomerase">
    <location>
        <begin position="1"/>
        <end position="237"/>
    </location>
</feature>
<feature type="active site" description="Proton acceptor" evidence="1">
    <location>
        <position position="8"/>
    </location>
</feature>
<feature type="active site" description="Proton donor" evidence="1">
    <location>
        <position position="130"/>
    </location>
</feature>
<evidence type="ECO:0000255" key="1">
    <source>
        <dbReference type="HAMAP-Rule" id="MF_01014"/>
    </source>
</evidence>
<organism>
    <name type="scientific">Caldicellulosiruptor saccharolyticus (strain ATCC 43494 / DSM 8903 / Tp8T 6331)</name>
    <dbReference type="NCBI Taxonomy" id="351627"/>
    <lineage>
        <taxon>Bacteria</taxon>
        <taxon>Bacillati</taxon>
        <taxon>Bacillota</taxon>
        <taxon>Bacillota incertae sedis</taxon>
        <taxon>Caldicellulosiruptorales</taxon>
        <taxon>Caldicellulosiruptoraceae</taxon>
        <taxon>Caldicellulosiruptor</taxon>
    </lineage>
</organism>
<sequence>MIVIPAIDIIDGKCVRLTQGDYSRVQEYNLDPVQQAKYFEKEGARYLHVVDLDGAKKGSPVNFEVIKRIKESTSLSVECGGGIRDKKTINDYLLAGIDYIILGSVIFKNPEFVEDVLKRFGNERFIASLDFEEGYVKLSGWQEATRISVEEGILHIKKLGFQKLIYTDIKTDGMLKGHNFEAAKYIRSLFDGFLISSGGISSMNDVLKLKDIGVDGVIIGKALYTGHVKLNEIINLV</sequence>
<reference key="1">
    <citation type="submission" date="2007-04" db="EMBL/GenBank/DDBJ databases">
        <title>Genome sequence of the thermophilic hydrogen-producing bacterium Caldicellulosiruptor saccharolyticus DSM 8903.</title>
        <authorList>
            <person name="Copeland A."/>
            <person name="Lucas S."/>
            <person name="Lapidus A."/>
            <person name="Barry K."/>
            <person name="Detter J.C."/>
            <person name="Glavina del Rio T."/>
            <person name="Hammon N."/>
            <person name="Israni S."/>
            <person name="Dalin E."/>
            <person name="Tice H."/>
            <person name="Pitluck S."/>
            <person name="Kiss H."/>
            <person name="Brettin T."/>
            <person name="Bruce D."/>
            <person name="Han C."/>
            <person name="Schmutz J."/>
            <person name="Larimer F."/>
            <person name="Land M."/>
            <person name="Hauser L."/>
            <person name="Kyrpides N."/>
            <person name="Lykidis A."/>
            <person name="van de Werken H.J.G."/>
            <person name="Verhaart M.R.A."/>
            <person name="VanFossen A.L."/>
            <person name="Lewis D.L."/>
            <person name="Nichols J.D."/>
            <person name="Goorissen H.P."/>
            <person name="van Niel E.W.J."/>
            <person name="Stams F.J.M."/>
            <person name="Willquist K.U."/>
            <person name="Ward D.E."/>
            <person name="van der Oost J."/>
            <person name="Kelly R.M."/>
            <person name="Kengen S.M.W."/>
            <person name="Richardson P."/>
        </authorList>
    </citation>
    <scope>NUCLEOTIDE SEQUENCE [LARGE SCALE GENOMIC DNA]</scope>
    <source>
        <strain>ATCC 43494 / DSM 8903 / Tp8T 6331</strain>
    </source>
</reference>
<comment type="catalytic activity">
    <reaction evidence="1">
        <text>1-(5-phospho-beta-D-ribosyl)-5-[(5-phospho-beta-D-ribosylamino)methylideneamino]imidazole-4-carboxamide = 5-[(5-phospho-1-deoxy-D-ribulos-1-ylimino)methylamino]-1-(5-phospho-beta-D-ribosyl)imidazole-4-carboxamide</text>
        <dbReference type="Rhea" id="RHEA:15469"/>
        <dbReference type="ChEBI" id="CHEBI:58435"/>
        <dbReference type="ChEBI" id="CHEBI:58525"/>
        <dbReference type="EC" id="5.3.1.16"/>
    </reaction>
</comment>
<comment type="pathway">
    <text evidence="1">Amino-acid biosynthesis; L-histidine biosynthesis; L-histidine from 5-phospho-alpha-D-ribose 1-diphosphate: step 4/9.</text>
</comment>
<comment type="subcellular location">
    <subcellularLocation>
        <location evidence="1">Cytoplasm</location>
    </subcellularLocation>
</comment>
<comment type="similarity">
    <text evidence="1">Belongs to the HisA/HisF family.</text>
</comment>
<dbReference type="EC" id="5.3.1.16" evidence="1"/>
<dbReference type="EMBL" id="CP000679">
    <property type="protein sequence ID" value="ABP67606.1"/>
    <property type="molecule type" value="Genomic_DNA"/>
</dbReference>
<dbReference type="RefSeq" id="WP_011917541.1">
    <property type="nucleotide sequence ID" value="NC_009437.1"/>
</dbReference>
<dbReference type="SMR" id="A4XL21"/>
<dbReference type="STRING" id="351627.Csac_2021"/>
<dbReference type="KEGG" id="csc:Csac_2021"/>
<dbReference type="eggNOG" id="COG0106">
    <property type="taxonomic scope" value="Bacteria"/>
</dbReference>
<dbReference type="HOGENOM" id="CLU_048577_1_2_9"/>
<dbReference type="OrthoDB" id="9807749at2"/>
<dbReference type="UniPathway" id="UPA00031">
    <property type="reaction ID" value="UER00009"/>
</dbReference>
<dbReference type="Proteomes" id="UP000000256">
    <property type="component" value="Chromosome"/>
</dbReference>
<dbReference type="GO" id="GO:0005737">
    <property type="term" value="C:cytoplasm"/>
    <property type="evidence" value="ECO:0007669"/>
    <property type="project" value="UniProtKB-SubCell"/>
</dbReference>
<dbReference type="GO" id="GO:0003949">
    <property type="term" value="F:1-(5-phosphoribosyl)-5-[(5-phosphoribosylamino)methylideneamino]imidazole-4-carboxamide isomerase activity"/>
    <property type="evidence" value="ECO:0007669"/>
    <property type="project" value="UniProtKB-UniRule"/>
</dbReference>
<dbReference type="GO" id="GO:0000105">
    <property type="term" value="P:L-histidine biosynthetic process"/>
    <property type="evidence" value="ECO:0007669"/>
    <property type="project" value="UniProtKB-UniRule"/>
</dbReference>
<dbReference type="GO" id="GO:0000162">
    <property type="term" value="P:L-tryptophan biosynthetic process"/>
    <property type="evidence" value="ECO:0007669"/>
    <property type="project" value="TreeGrafter"/>
</dbReference>
<dbReference type="CDD" id="cd04732">
    <property type="entry name" value="HisA"/>
    <property type="match status" value="1"/>
</dbReference>
<dbReference type="FunFam" id="3.20.20.70:FF:000009">
    <property type="entry name" value="1-(5-phosphoribosyl)-5-[(5-phosphoribosylamino)methylideneamino] imidazole-4-carboxamide isomerase"/>
    <property type="match status" value="1"/>
</dbReference>
<dbReference type="Gene3D" id="3.20.20.70">
    <property type="entry name" value="Aldolase class I"/>
    <property type="match status" value="1"/>
</dbReference>
<dbReference type="HAMAP" id="MF_01014">
    <property type="entry name" value="HisA"/>
    <property type="match status" value="1"/>
</dbReference>
<dbReference type="InterPro" id="IPR013785">
    <property type="entry name" value="Aldolase_TIM"/>
</dbReference>
<dbReference type="InterPro" id="IPR006062">
    <property type="entry name" value="His_biosynth"/>
</dbReference>
<dbReference type="InterPro" id="IPR006063">
    <property type="entry name" value="HisA_bact_arch"/>
</dbReference>
<dbReference type="InterPro" id="IPR044524">
    <property type="entry name" value="Isoase_HisA-like"/>
</dbReference>
<dbReference type="InterPro" id="IPR023016">
    <property type="entry name" value="Isoase_HisA-like_bact"/>
</dbReference>
<dbReference type="InterPro" id="IPR011060">
    <property type="entry name" value="RibuloseP-bd_barrel"/>
</dbReference>
<dbReference type="NCBIfam" id="TIGR00007">
    <property type="entry name" value="1-(5-phosphoribosyl)-5-[(5-phosphoribosylamino)methylideneamino]imidazole-4-carboxamide isomerase"/>
    <property type="match status" value="1"/>
</dbReference>
<dbReference type="PANTHER" id="PTHR43090">
    <property type="entry name" value="1-(5-PHOSPHORIBOSYL)-5-[(5-PHOSPHORIBOSYLAMINO)METHYLIDENEAMINO] IMIDAZOLE-4-CARBOXAMIDE ISOMERASE"/>
    <property type="match status" value="1"/>
</dbReference>
<dbReference type="PANTHER" id="PTHR43090:SF2">
    <property type="entry name" value="1-(5-PHOSPHORIBOSYL)-5-[(5-PHOSPHORIBOSYLAMINO)METHYLIDENEAMINO] IMIDAZOLE-4-CARBOXAMIDE ISOMERASE"/>
    <property type="match status" value="1"/>
</dbReference>
<dbReference type="Pfam" id="PF00977">
    <property type="entry name" value="His_biosynth"/>
    <property type="match status" value="1"/>
</dbReference>
<dbReference type="SUPFAM" id="SSF51366">
    <property type="entry name" value="Ribulose-phoshate binding barrel"/>
    <property type="match status" value="1"/>
</dbReference>
<keyword id="KW-0028">Amino-acid biosynthesis</keyword>
<keyword id="KW-0963">Cytoplasm</keyword>
<keyword id="KW-0368">Histidine biosynthesis</keyword>
<keyword id="KW-0413">Isomerase</keyword>
<accession>A4XL21</accession>
<protein>
    <recommendedName>
        <fullName evidence="1">1-(5-phosphoribosyl)-5-[(5-phosphoribosylamino)methylideneamino] imidazole-4-carboxamide isomerase</fullName>
        <ecNumber evidence="1">5.3.1.16</ecNumber>
    </recommendedName>
    <alternativeName>
        <fullName evidence="1">Phosphoribosylformimino-5-aminoimidazole carboxamide ribotide isomerase</fullName>
    </alternativeName>
</protein>
<name>HIS4_CALS8</name>